<proteinExistence type="inferred from homology"/>
<feature type="chain" id="PRO_0000155282" description="Thymidylate kinase">
    <location>
        <begin position="1"/>
        <end position="195"/>
    </location>
</feature>
<feature type="binding site" evidence="1">
    <location>
        <begin position="7"/>
        <end position="14"/>
    </location>
    <ligand>
        <name>ATP</name>
        <dbReference type="ChEBI" id="CHEBI:30616"/>
    </ligand>
</feature>
<dbReference type="EC" id="2.7.4.9" evidence="1"/>
<dbReference type="EMBL" id="AE017125">
    <property type="protein sequence ID" value="AAP77959.1"/>
    <property type="molecule type" value="Genomic_DNA"/>
</dbReference>
<dbReference type="RefSeq" id="WP_011116202.1">
    <property type="nucleotide sequence ID" value="NC_004917.1"/>
</dbReference>
<dbReference type="SMR" id="Q7VGF9"/>
<dbReference type="STRING" id="235279.HH_1362"/>
<dbReference type="KEGG" id="hhe:HH_1362"/>
<dbReference type="eggNOG" id="COG0125">
    <property type="taxonomic scope" value="Bacteria"/>
</dbReference>
<dbReference type="HOGENOM" id="CLU_049131_0_0_7"/>
<dbReference type="OrthoDB" id="9774907at2"/>
<dbReference type="Proteomes" id="UP000002495">
    <property type="component" value="Chromosome"/>
</dbReference>
<dbReference type="GO" id="GO:0005829">
    <property type="term" value="C:cytosol"/>
    <property type="evidence" value="ECO:0007669"/>
    <property type="project" value="TreeGrafter"/>
</dbReference>
<dbReference type="GO" id="GO:0005524">
    <property type="term" value="F:ATP binding"/>
    <property type="evidence" value="ECO:0007669"/>
    <property type="project" value="UniProtKB-UniRule"/>
</dbReference>
<dbReference type="GO" id="GO:0004798">
    <property type="term" value="F:dTMP kinase activity"/>
    <property type="evidence" value="ECO:0007669"/>
    <property type="project" value="UniProtKB-UniRule"/>
</dbReference>
<dbReference type="GO" id="GO:0006233">
    <property type="term" value="P:dTDP biosynthetic process"/>
    <property type="evidence" value="ECO:0007669"/>
    <property type="project" value="InterPro"/>
</dbReference>
<dbReference type="GO" id="GO:0006235">
    <property type="term" value="P:dTTP biosynthetic process"/>
    <property type="evidence" value="ECO:0007669"/>
    <property type="project" value="UniProtKB-UniRule"/>
</dbReference>
<dbReference type="GO" id="GO:0006227">
    <property type="term" value="P:dUDP biosynthetic process"/>
    <property type="evidence" value="ECO:0007669"/>
    <property type="project" value="TreeGrafter"/>
</dbReference>
<dbReference type="CDD" id="cd01672">
    <property type="entry name" value="TMPK"/>
    <property type="match status" value="1"/>
</dbReference>
<dbReference type="Gene3D" id="3.40.50.300">
    <property type="entry name" value="P-loop containing nucleotide triphosphate hydrolases"/>
    <property type="match status" value="1"/>
</dbReference>
<dbReference type="HAMAP" id="MF_00165">
    <property type="entry name" value="Thymidylate_kinase"/>
    <property type="match status" value="1"/>
</dbReference>
<dbReference type="InterPro" id="IPR027417">
    <property type="entry name" value="P-loop_NTPase"/>
</dbReference>
<dbReference type="InterPro" id="IPR039430">
    <property type="entry name" value="Thymidylate_kin-like_dom"/>
</dbReference>
<dbReference type="InterPro" id="IPR018094">
    <property type="entry name" value="Thymidylate_kinase"/>
</dbReference>
<dbReference type="NCBIfam" id="TIGR00041">
    <property type="entry name" value="DTMP_kinase"/>
    <property type="match status" value="1"/>
</dbReference>
<dbReference type="PANTHER" id="PTHR10344">
    <property type="entry name" value="THYMIDYLATE KINASE"/>
    <property type="match status" value="1"/>
</dbReference>
<dbReference type="PANTHER" id="PTHR10344:SF4">
    <property type="entry name" value="UMP-CMP KINASE 2, MITOCHONDRIAL"/>
    <property type="match status" value="1"/>
</dbReference>
<dbReference type="Pfam" id="PF02223">
    <property type="entry name" value="Thymidylate_kin"/>
    <property type="match status" value="1"/>
</dbReference>
<dbReference type="SUPFAM" id="SSF52540">
    <property type="entry name" value="P-loop containing nucleoside triphosphate hydrolases"/>
    <property type="match status" value="1"/>
</dbReference>
<dbReference type="PROSITE" id="PS01331">
    <property type="entry name" value="THYMIDYLATE_KINASE"/>
    <property type="match status" value="1"/>
</dbReference>
<name>KTHY_HELHP</name>
<organism>
    <name type="scientific">Helicobacter hepaticus (strain ATCC 51449 / 3B1)</name>
    <dbReference type="NCBI Taxonomy" id="235279"/>
    <lineage>
        <taxon>Bacteria</taxon>
        <taxon>Pseudomonadati</taxon>
        <taxon>Campylobacterota</taxon>
        <taxon>Epsilonproteobacteria</taxon>
        <taxon>Campylobacterales</taxon>
        <taxon>Helicobacteraceae</taxon>
        <taxon>Helicobacter</taxon>
    </lineage>
</organism>
<comment type="function">
    <text evidence="1">Phosphorylation of dTMP to form dTDP in both de novo and salvage pathways of dTTP synthesis.</text>
</comment>
<comment type="catalytic activity">
    <reaction evidence="1">
        <text>dTMP + ATP = dTDP + ADP</text>
        <dbReference type="Rhea" id="RHEA:13517"/>
        <dbReference type="ChEBI" id="CHEBI:30616"/>
        <dbReference type="ChEBI" id="CHEBI:58369"/>
        <dbReference type="ChEBI" id="CHEBI:63528"/>
        <dbReference type="ChEBI" id="CHEBI:456216"/>
        <dbReference type="EC" id="2.7.4.9"/>
    </reaction>
</comment>
<comment type="similarity">
    <text evidence="1">Belongs to the thymidylate kinase family.</text>
</comment>
<keyword id="KW-0067">ATP-binding</keyword>
<keyword id="KW-0418">Kinase</keyword>
<keyword id="KW-0545">Nucleotide biosynthesis</keyword>
<keyword id="KW-0547">Nucleotide-binding</keyword>
<keyword id="KW-1185">Reference proteome</keyword>
<keyword id="KW-0808">Transferase</keyword>
<gene>
    <name evidence="1" type="primary">tmk</name>
    <name type="ordered locus">HH_1362</name>
</gene>
<evidence type="ECO:0000255" key="1">
    <source>
        <dbReference type="HAMAP-Rule" id="MF_00165"/>
    </source>
</evidence>
<reference key="1">
    <citation type="journal article" date="2003" name="Proc. Natl. Acad. Sci. U.S.A.">
        <title>The complete genome sequence of the carcinogenic bacterium Helicobacter hepaticus.</title>
        <authorList>
            <person name="Suerbaum S."/>
            <person name="Josenhans C."/>
            <person name="Sterzenbach T."/>
            <person name="Drescher B."/>
            <person name="Brandt P."/>
            <person name="Bell M."/>
            <person name="Droege M."/>
            <person name="Fartmann B."/>
            <person name="Fischer H.-P."/>
            <person name="Ge Z."/>
            <person name="Hoerster A."/>
            <person name="Holland R."/>
            <person name="Klein K."/>
            <person name="Koenig J."/>
            <person name="Macko L."/>
            <person name="Mendz G.L."/>
            <person name="Nyakatura G."/>
            <person name="Schauer D.B."/>
            <person name="Shen Z."/>
            <person name="Weber J."/>
            <person name="Frosch M."/>
            <person name="Fox J.G."/>
        </authorList>
    </citation>
    <scope>NUCLEOTIDE SEQUENCE [LARGE SCALE GENOMIC DNA]</scope>
    <source>
        <strain>ATCC 51449 / 3B1</strain>
    </source>
</reference>
<protein>
    <recommendedName>
        <fullName evidence="1">Thymidylate kinase</fullName>
        <ecNumber evidence="1">2.7.4.9</ecNumber>
    </recommendedName>
    <alternativeName>
        <fullName evidence="1">dTMP kinase</fullName>
    </alternativeName>
</protein>
<sequence>MYVAIEGVDTCGKSTQIQLLKAYYPQAVFTKEPGGSIIGEHIRDLVLFAPKKYGFTLDERAELMLFLADRAQHYAQVLLPHKDKLIISDRSVISGIAYAKSIDIAQSIALNDFVLRGMLPDLVVILELDEKSLKERIESKSHDNIESRGISYMLEIQKCFKNVVTQMNLKYIVLDATQDKERICAQIREHINILV</sequence>
<accession>Q7VGF9</accession>